<protein>
    <recommendedName>
        <fullName evidence="1">UPF0102 protein Bcep1808_0248</fullName>
    </recommendedName>
</protein>
<organism>
    <name type="scientific">Burkholderia vietnamiensis (strain G4 / LMG 22486)</name>
    <name type="common">Burkholderia cepacia (strain R1808)</name>
    <dbReference type="NCBI Taxonomy" id="269482"/>
    <lineage>
        <taxon>Bacteria</taxon>
        <taxon>Pseudomonadati</taxon>
        <taxon>Pseudomonadota</taxon>
        <taxon>Betaproteobacteria</taxon>
        <taxon>Burkholderiales</taxon>
        <taxon>Burkholderiaceae</taxon>
        <taxon>Burkholderia</taxon>
        <taxon>Burkholderia cepacia complex</taxon>
    </lineage>
</organism>
<proteinExistence type="inferred from homology"/>
<evidence type="ECO:0000255" key="1">
    <source>
        <dbReference type="HAMAP-Rule" id="MF_00048"/>
    </source>
</evidence>
<reference key="1">
    <citation type="submission" date="2007-03" db="EMBL/GenBank/DDBJ databases">
        <title>Complete sequence of chromosome 1 of Burkholderia vietnamiensis G4.</title>
        <authorList>
            <consortium name="US DOE Joint Genome Institute"/>
            <person name="Copeland A."/>
            <person name="Lucas S."/>
            <person name="Lapidus A."/>
            <person name="Barry K."/>
            <person name="Detter J.C."/>
            <person name="Glavina del Rio T."/>
            <person name="Hammon N."/>
            <person name="Israni S."/>
            <person name="Dalin E."/>
            <person name="Tice H."/>
            <person name="Pitluck S."/>
            <person name="Chain P."/>
            <person name="Malfatti S."/>
            <person name="Shin M."/>
            <person name="Vergez L."/>
            <person name="Schmutz J."/>
            <person name="Larimer F."/>
            <person name="Land M."/>
            <person name="Hauser L."/>
            <person name="Kyrpides N."/>
            <person name="Tiedje J."/>
            <person name="Richardson P."/>
        </authorList>
    </citation>
    <scope>NUCLEOTIDE SEQUENCE [LARGE SCALE GENOMIC DNA]</scope>
    <source>
        <strain>G4 / LMG 22486</strain>
    </source>
</reference>
<accession>A4JAG1</accession>
<comment type="similarity">
    <text evidence="1">Belongs to the UPF0102 family.</text>
</comment>
<name>Y248_BURVG</name>
<feature type="chain" id="PRO_0000336150" description="UPF0102 protein Bcep1808_0248">
    <location>
        <begin position="1"/>
        <end position="142"/>
    </location>
</feature>
<dbReference type="EMBL" id="CP000614">
    <property type="protein sequence ID" value="ABO53264.1"/>
    <property type="molecule type" value="Genomic_DNA"/>
</dbReference>
<dbReference type="SMR" id="A4JAG1"/>
<dbReference type="KEGG" id="bvi:Bcep1808_0248"/>
<dbReference type="eggNOG" id="COG0792">
    <property type="taxonomic scope" value="Bacteria"/>
</dbReference>
<dbReference type="HOGENOM" id="CLU_115353_1_0_4"/>
<dbReference type="Proteomes" id="UP000002287">
    <property type="component" value="Chromosome 1"/>
</dbReference>
<dbReference type="GO" id="GO:0003676">
    <property type="term" value="F:nucleic acid binding"/>
    <property type="evidence" value="ECO:0007669"/>
    <property type="project" value="InterPro"/>
</dbReference>
<dbReference type="Gene3D" id="3.40.1350.10">
    <property type="match status" value="1"/>
</dbReference>
<dbReference type="HAMAP" id="MF_00048">
    <property type="entry name" value="UPF0102"/>
    <property type="match status" value="1"/>
</dbReference>
<dbReference type="InterPro" id="IPR011335">
    <property type="entry name" value="Restrct_endonuc-II-like"/>
</dbReference>
<dbReference type="InterPro" id="IPR011856">
    <property type="entry name" value="tRNA_endonuc-like_dom_sf"/>
</dbReference>
<dbReference type="InterPro" id="IPR003509">
    <property type="entry name" value="UPF0102_YraN-like"/>
</dbReference>
<dbReference type="NCBIfam" id="NF009150">
    <property type="entry name" value="PRK12497.1-3"/>
    <property type="match status" value="1"/>
</dbReference>
<dbReference type="NCBIfam" id="TIGR00252">
    <property type="entry name" value="YraN family protein"/>
    <property type="match status" value="1"/>
</dbReference>
<dbReference type="PANTHER" id="PTHR34039">
    <property type="entry name" value="UPF0102 PROTEIN YRAN"/>
    <property type="match status" value="1"/>
</dbReference>
<dbReference type="PANTHER" id="PTHR34039:SF1">
    <property type="entry name" value="UPF0102 PROTEIN YRAN"/>
    <property type="match status" value="1"/>
</dbReference>
<dbReference type="Pfam" id="PF02021">
    <property type="entry name" value="UPF0102"/>
    <property type="match status" value="1"/>
</dbReference>
<dbReference type="SUPFAM" id="SSF52980">
    <property type="entry name" value="Restriction endonuclease-like"/>
    <property type="match status" value="1"/>
</dbReference>
<sequence length="142" mass="15250">MCHAAPAAPAGGRDAPRGGGEFSGAVRSRAVGANFEQRARQFLERRGLAFVAANVTIRGGELDLVMRASDGMLVFVEVRARRSARHGGAAASVGWRKRRRVIAAALDFWARHGAGAACRFDVVAFEAGRLDWLRDAFRADDA</sequence>
<gene>
    <name type="ordered locus">Bcep1808_0248</name>
</gene>